<protein>
    <recommendedName>
        <fullName evidence="1">DNA-directed RNA polymerase subunit beta'</fullName>
        <shortName evidence="1">RNAP subunit beta'</shortName>
        <ecNumber evidence="1">2.7.7.6</ecNumber>
    </recommendedName>
    <alternativeName>
        <fullName evidence="1">RNA polymerase subunit beta'</fullName>
    </alternativeName>
    <alternativeName>
        <fullName evidence="1">Transcriptase subunit beta'</fullName>
    </alternativeName>
</protein>
<dbReference type="EC" id="2.7.7.6" evidence="1"/>
<dbReference type="EMBL" id="CP000395">
    <property type="protein sequence ID" value="ABH01659.1"/>
    <property type="molecule type" value="Genomic_DNA"/>
</dbReference>
<dbReference type="EMBL" id="CP002933">
    <property type="protein sequence ID" value="AEL69616.1"/>
    <property type="molecule type" value="Genomic_DNA"/>
</dbReference>
<dbReference type="RefSeq" id="WP_004790677.1">
    <property type="nucleotide sequence ID" value="NZ_CP160066.1"/>
</dbReference>
<dbReference type="SMR" id="Q0SNB9"/>
<dbReference type="STRING" id="29518.BLA32_02365"/>
<dbReference type="GeneID" id="76831921"/>
<dbReference type="KEGG" id="baf:BAPKO_0403"/>
<dbReference type="KEGG" id="bafz:BafPKo_0390"/>
<dbReference type="PATRIC" id="fig|390236.22.peg.383"/>
<dbReference type="eggNOG" id="COG0086">
    <property type="taxonomic scope" value="Bacteria"/>
</dbReference>
<dbReference type="HOGENOM" id="CLU_000524_3_1_12"/>
<dbReference type="OrthoDB" id="9815296at2"/>
<dbReference type="Proteomes" id="UP000005216">
    <property type="component" value="Chromosome"/>
</dbReference>
<dbReference type="GO" id="GO:0000428">
    <property type="term" value="C:DNA-directed RNA polymerase complex"/>
    <property type="evidence" value="ECO:0007669"/>
    <property type="project" value="UniProtKB-KW"/>
</dbReference>
<dbReference type="GO" id="GO:0003677">
    <property type="term" value="F:DNA binding"/>
    <property type="evidence" value="ECO:0007669"/>
    <property type="project" value="UniProtKB-UniRule"/>
</dbReference>
<dbReference type="GO" id="GO:0003899">
    <property type="term" value="F:DNA-directed RNA polymerase activity"/>
    <property type="evidence" value="ECO:0007669"/>
    <property type="project" value="UniProtKB-UniRule"/>
</dbReference>
<dbReference type="GO" id="GO:0000287">
    <property type="term" value="F:magnesium ion binding"/>
    <property type="evidence" value="ECO:0007669"/>
    <property type="project" value="UniProtKB-UniRule"/>
</dbReference>
<dbReference type="GO" id="GO:0008270">
    <property type="term" value="F:zinc ion binding"/>
    <property type="evidence" value="ECO:0007669"/>
    <property type="project" value="UniProtKB-UniRule"/>
</dbReference>
<dbReference type="GO" id="GO:0006351">
    <property type="term" value="P:DNA-templated transcription"/>
    <property type="evidence" value="ECO:0007669"/>
    <property type="project" value="UniProtKB-UniRule"/>
</dbReference>
<dbReference type="CDD" id="cd02655">
    <property type="entry name" value="RNAP_beta'_C"/>
    <property type="match status" value="1"/>
</dbReference>
<dbReference type="CDD" id="cd01609">
    <property type="entry name" value="RNAP_beta'_N"/>
    <property type="match status" value="1"/>
</dbReference>
<dbReference type="Gene3D" id="1.10.132.30">
    <property type="match status" value="1"/>
</dbReference>
<dbReference type="Gene3D" id="1.10.150.390">
    <property type="match status" value="1"/>
</dbReference>
<dbReference type="Gene3D" id="1.10.1790.20">
    <property type="match status" value="1"/>
</dbReference>
<dbReference type="Gene3D" id="1.10.40.90">
    <property type="match status" value="1"/>
</dbReference>
<dbReference type="Gene3D" id="2.40.40.20">
    <property type="match status" value="1"/>
</dbReference>
<dbReference type="Gene3D" id="2.40.50.100">
    <property type="match status" value="2"/>
</dbReference>
<dbReference type="Gene3D" id="4.10.860.120">
    <property type="entry name" value="RNA polymerase II, clamp domain"/>
    <property type="match status" value="1"/>
</dbReference>
<dbReference type="Gene3D" id="1.10.274.100">
    <property type="entry name" value="RNA polymerase Rpb1, domain 3"/>
    <property type="match status" value="1"/>
</dbReference>
<dbReference type="HAMAP" id="MF_01322">
    <property type="entry name" value="RNApol_bact_RpoC"/>
    <property type="match status" value="1"/>
</dbReference>
<dbReference type="InterPro" id="IPR045867">
    <property type="entry name" value="DNA-dir_RpoC_beta_prime"/>
</dbReference>
<dbReference type="InterPro" id="IPR012754">
    <property type="entry name" value="DNA-dir_RpoC_beta_prime_bact"/>
</dbReference>
<dbReference type="InterPro" id="IPR000722">
    <property type="entry name" value="RNA_pol_asu"/>
</dbReference>
<dbReference type="InterPro" id="IPR006592">
    <property type="entry name" value="RNA_pol_N"/>
</dbReference>
<dbReference type="InterPro" id="IPR007080">
    <property type="entry name" value="RNA_pol_Rpb1_1"/>
</dbReference>
<dbReference type="InterPro" id="IPR007066">
    <property type="entry name" value="RNA_pol_Rpb1_3"/>
</dbReference>
<dbReference type="InterPro" id="IPR042102">
    <property type="entry name" value="RNA_pol_Rpb1_3_sf"/>
</dbReference>
<dbReference type="InterPro" id="IPR007083">
    <property type="entry name" value="RNA_pol_Rpb1_4"/>
</dbReference>
<dbReference type="InterPro" id="IPR007081">
    <property type="entry name" value="RNA_pol_Rpb1_5"/>
</dbReference>
<dbReference type="InterPro" id="IPR044893">
    <property type="entry name" value="RNA_pol_Rpb1_clamp_domain"/>
</dbReference>
<dbReference type="InterPro" id="IPR038120">
    <property type="entry name" value="Rpb1_funnel_sf"/>
</dbReference>
<dbReference type="NCBIfam" id="TIGR02386">
    <property type="entry name" value="rpoC_TIGR"/>
    <property type="match status" value="1"/>
</dbReference>
<dbReference type="PANTHER" id="PTHR19376">
    <property type="entry name" value="DNA-DIRECTED RNA POLYMERASE"/>
    <property type="match status" value="1"/>
</dbReference>
<dbReference type="PANTHER" id="PTHR19376:SF54">
    <property type="entry name" value="DNA-DIRECTED RNA POLYMERASE SUBUNIT BETA"/>
    <property type="match status" value="1"/>
</dbReference>
<dbReference type="Pfam" id="PF04997">
    <property type="entry name" value="RNA_pol_Rpb1_1"/>
    <property type="match status" value="1"/>
</dbReference>
<dbReference type="Pfam" id="PF00623">
    <property type="entry name" value="RNA_pol_Rpb1_2"/>
    <property type="match status" value="2"/>
</dbReference>
<dbReference type="Pfam" id="PF04983">
    <property type="entry name" value="RNA_pol_Rpb1_3"/>
    <property type="match status" value="1"/>
</dbReference>
<dbReference type="Pfam" id="PF05000">
    <property type="entry name" value="RNA_pol_Rpb1_4"/>
    <property type="match status" value="1"/>
</dbReference>
<dbReference type="Pfam" id="PF04998">
    <property type="entry name" value="RNA_pol_Rpb1_5"/>
    <property type="match status" value="1"/>
</dbReference>
<dbReference type="SMART" id="SM00663">
    <property type="entry name" value="RPOLA_N"/>
    <property type="match status" value="1"/>
</dbReference>
<dbReference type="SUPFAM" id="SSF64484">
    <property type="entry name" value="beta and beta-prime subunits of DNA dependent RNA-polymerase"/>
    <property type="match status" value="1"/>
</dbReference>
<evidence type="ECO:0000255" key="1">
    <source>
        <dbReference type="HAMAP-Rule" id="MF_01322"/>
    </source>
</evidence>
<name>RPOC_BORAP</name>
<reference key="1">
    <citation type="journal article" date="2006" name="BMC Genomics">
        <title>Comparative genome analysis: selection pressure on the Borrelia vls cassettes is essential for infectivity.</title>
        <authorList>
            <person name="Gloeckner G."/>
            <person name="Schulte-Spechtel U."/>
            <person name="Schilhabel M."/>
            <person name="Felder M."/>
            <person name="Suehnel J."/>
            <person name="Wilske B."/>
            <person name="Platzer M."/>
        </authorList>
    </citation>
    <scope>NUCLEOTIDE SEQUENCE [LARGE SCALE GENOMIC DNA]</scope>
    <source>
        <strain>PKo</strain>
    </source>
</reference>
<reference key="2">
    <citation type="journal article" date="2011" name="J. Bacteriol.">
        <title>Whole-genome sequences of two Borrelia afzelii and two Borrelia garinii Lyme disease agent isolates.</title>
        <authorList>
            <person name="Casjens S.R."/>
            <person name="Mongodin E.F."/>
            <person name="Qiu W.G."/>
            <person name="Dunn J.J."/>
            <person name="Luft B.J."/>
            <person name="Fraser-Liggett C.M."/>
            <person name="Schutzer S.E."/>
        </authorList>
    </citation>
    <scope>NUCLEOTIDE SEQUENCE [LARGE SCALE GENOMIC DNA]</scope>
    <source>
        <strain>PKo</strain>
    </source>
</reference>
<keyword id="KW-0240">DNA-directed RNA polymerase</keyword>
<keyword id="KW-0460">Magnesium</keyword>
<keyword id="KW-0479">Metal-binding</keyword>
<keyword id="KW-0548">Nucleotidyltransferase</keyword>
<keyword id="KW-0804">Transcription</keyword>
<keyword id="KW-0808">Transferase</keyword>
<keyword id="KW-0862">Zinc</keyword>
<feature type="chain" id="PRO_0000308822" description="DNA-directed RNA polymerase subunit beta'">
    <location>
        <begin position="1"/>
        <end position="1377"/>
    </location>
</feature>
<feature type="binding site" evidence="1">
    <location>
        <position position="60"/>
    </location>
    <ligand>
        <name>Zn(2+)</name>
        <dbReference type="ChEBI" id="CHEBI:29105"/>
        <label>1</label>
    </ligand>
</feature>
<feature type="binding site" evidence="1">
    <location>
        <position position="62"/>
    </location>
    <ligand>
        <name>Zn(2+)</name>
        <dbReference type="ChEBI" id="CHEBI:29105"/>
        <label>1</label>
    </ligand>
</feature>
<feature type="binding site" evidence="1">
    <location>
        <position position="75"/>
    </location>
    <ligand>
        <name>Zn(2+)</name>
        <dbReference type="ChEBI" id="CHEBI:29105"/>
        <label>1</label>
    </ligand>
</feature>
<feature type="binding site" evidence="1">
    <location>
        <position position="78"/>
    </location>
    <ligand>
        <name>Zn(2+)</name>
        <dbReference type="ChEBI" id="CHEBI:29105"/>
        <label>1</label>
    </ligand>
</feature>
<feature type="binding site" evidence="1">
    <location>
        <position position="449"/>
    </location>
    <ligand>
        <name>Mg(2+)</name>
        <dbReference type="ChEBI" id="CHEBI:18420"/>
    </ligand>
</feature>
<feature type="binding site" evidence="1">
    <location>
        <position position="451"/>
    </location>
    <ligand>
        <name>Mg(2+)</name>
        <dbReference type="ChEBI" id="CHEBI:18420"/>
    </ligand>
</feature>
<feature type="binding site" evidence="1">
    <location>
        <position position="453"/>
    </location>
    <ligand>
        <name>Mg(2+)</name>
        <dbReference type="ChEBI" id="CHEBI:18420"/>
    </ligand>
</feature>
<feature type="binding site" evidence="1">
    <location>
        <position position="777"/>
    </location>
    <ligand>
        <name>Zn(2+)</name>
        <dbReference type="ChEBI" id="CHEBI:29105"/>
        <label>2</label>
    </ligand>
</feature>
<feature type="binding site" evidence="1">
    <location>
        <position position="851"/>
    </location>
    <ligand>
        <name>Zn(2+)</name>
        <dbReference type="ChEBI" id="CHEBI:29105"/>
        <label>2</label>
    </ligand>
</feature>
<feature type="binding site" evidence="1">
    <location>
        <position position="858"/>
    </location>
    <ligand>
        <name>Zn(2+)</name>
        <dbReference type="ChEBI" id="CHEBI:29105"/>
        <label>2</label>
    </ligand>
</feature>
<feature type="binding site" evidence="1">
    <location>
        <position position="861"/>
    </location>
    <ligand>
        <name>Zn(2+)</name>
        <dbReference type="ChEBI" id="CHEBI:29105"/>
        <label>2</label>
    </ligand>
</feature>
<organism>
    <name type="scientific">Borreliella afzelii (strain PKo)</name>
    <name type="common">Borrelia afzelii</name>
    <dbReference type="NCBI Taxonomy" id="390236"/>
    <lineage>
        <taxon>Bacteria</taxon>
        <taxon>Pseudomonadati</taxon>
        <taxon>Spirochaetota</taxon>
        <taxon>Spirochaetia</taxon>
        <taxon>Spirochaetales</taxon>
        <taxon>Borreliaceae</taxon>
        <taxon>Borreliella</taxon>
    </lineage>
</organism>
<proteinExistence type="inferred from homology"/>
<gene>
    <name evidence="1" type="primary">rpoC</name>
    <name type="ordered locus">BAPKO_0403</name>
    <name type="ordered locus">BafPKo_0390</name>
</gene>
<sequence length="1377" mass="154472">MKEIKDFEKIKIKIASPDQIRNWSYGEVKKSETINYRTLRPEKDGLFCERIFGTTKEWECYCGKFKSVRYKGIICDRCNVEVTHFKVRRERMGHIELAAPVAHIWYYKYIPSRIGLLLDITASSLNSILYYEKYVVIEPGDTDLKKMQLLNEDEYIEARERYGMSFNASMGAEAIKSLLENLDLDELSSKLRIQMIDKDDKTDKKLLRRLEIIENFKISGNKPEWMIMEVLPVIPPEIRPMVQLDGGRFATSDLNDLYRRVINRNNRLRKLLLLNAPEIIVRNEKRMLQESVDSLFDNSHKRKVVKGSSSRPLKSLSDALKGKQGRFRQNLLGKRVDYSGRSVIVVGPELKLHQCGLPAKMALELFKPFVIRRLIESEAVFNIKRAKNLIEQEVDEVWQILDLVIKEHPILLNRAPTLHRLGIQAFEPVLVEGKAIKLHPLVCHAYNADFDGDQMAVHVPLTPSAQAESWALMLSTNNLLNPANGHPIVFPSQDIVLGLYYLTMEKKNTVGEGKKFLNFNNVILAINNRSLDYNASIYVKIDGKYKKTTAGRVIFNEALPNGIEFVNKTLSDLELQILISKVYVVHGSSTVIEMLDIIKELGFKYATKFGCTISMSDIIVPDEKKAYIDRANKEIAKIQNDYAKGVITGEERYNNVVSVWLKTNEELTNKMMEILKKDRDGFNVIYMMADSGARGSRNQIRQLAGMRGLMAKTSGDIIELPIISNFKEGLSVIEFFISTNGARKGLADTALKTADAGYLTRRLVDIAQDVVVRIEDCGTINGIKVETVKNGEEILESLKEKAVGSYSIERIKNPITGEIVLDANEEISEAKIELLEKIGIEKLVIRSVLTCEAEHGVCQKCYGRDFSKNKPVNIGEAVGIIAAQSIGQPGTQLTMRTFHIGGVAQAGSEDDKISLKNTFILNGIEGFNVRVENGILFTRKGTLKIINVFYEEKIKNIKEIKVSDSQRVIKGIPLFVNNKGVEILSSYIGYVKLRDDKFLIVSEEQEVSLKAGTKLEIEVGEYVESGKVIGTFDPFAEPIIAEVKGKIKFKDIILGTTLKEEINTETGNVEKRITDNVFESLDPRIFIIDSGGVEIASYVLPGDAYLQVEDGQNINIGDIIAKLSKGSEKTQDITGGLPRVNDLFETRIPKNLTEMAKVSGIVQFKSIQKGKRLINILDEYGVEHKHYIPAGKHLLVRDGDIVKAGDMLCDGRINPHDVLEILGGISLQEFLLAEIQDVYRKQGVSINDKHIGVIIKQMMKKVKIVAVGDTNFVYGQKVDKHTFYEQNRKVIEQGGEPAIASPILIGVTKTSLNIDSFISAASFQETTKVLTDASIAGKIDDLRGLKENVVIGHLIPTGTGMGLYKKIKVSENVNSEV</sequence>
<comment type="function">
    <text evidence="1">DNA-dependent RNA polymerase catalyzes the transcription of DNA into RNA using the four ribonucleoside triphosphates as substrates.</text>
</comment>
<comment type="catalytic activity">
    <reaction evidence="1">
        <text>RNA(n) + a ribonucleoside 5'-triphosphate = RNA(n+1) + diphosphate</text>
        <dbReference type="Rhea" id="RHEA:21248"/>
        <dbReference type="Rhea" id="RHEA-COMP:14527"/>
        <dbReference type="Rhea" id="RHEA-COMP:17342"/>
        <dbReference type="ChEBI" id="CHEBI:33019"/>
        <dbReference type="ChEBI" id="CHEBI:61557"/>
        <dbReference type="ChEBI" id="CHEBI:140395"/>
        <dbReference type="EC" id="2.7.7.6"/>
    </reaction>
</comment>
<comment type="cofactor">
    <cofactor evidence="1">
        <name>Mg(2+)</name>
        <dbReference type="ChEBI" id="CHEBI:18420"/>
    </cofactor>
    <text evidence="1">Binds 1 Mg(2+) ion per subunit.</text>
</comment>
<comment type="cofactor">
    <cofactor evidence="1">
        <name>Zn(2+)</name>
        <dbReference type="ChEBI" id="CHEBI:29105"/>
    </cofactor>
    <text evidence="1">Binds 2 Zn(2+) ions per subunit.</text>
</comment>
<comment type="subunit">
    <text evidence="1">The RNAP catalytic core consists of 2 alpha, 1 beta, 1 beta' and 1 omega subunit. When a sigma factor is associated with the core the holoenzyme is formed, which can initiate transcription.</text>
</comment>
<comment type="similarity">
    <text evidence="1">Belongs to the RNA polymerase beta' chain family.</text>
</comment>
<accession>Q0SNB9</accession>
<accession>G0IS35</accession>